<feature type="chain" id="PRO_1000201591" description="Aspartate carbamoyltransferase catalytic subunit">
    <location>
        <begin position="1"/>
        <end position="319"/>
    </location>
</feature>
<feature type="binding site" evidence="1">
    <location>
        <position position="59"/>
    </location>
    <ligand>
        <name>carbamoyl phosphate</name>
        <dbReference type="ChEBI" id="CHEBI:58228"/>
    </ligand>
</feature>
<feature type="binding site" evidence="1">
    <location>
        <position position="60"/>
    </location>
    <ligand>
        <name>carbamoyl phosphate</name>
        <dbReference type="ChEBI" id="CHEBI:58228"/>
    </ligand>
</feature>
<feature type="binding site" evidence="1">
    <location>
        <position position="87"/>
    </location>
    <ligand>
        <name>L-aspartate</name>
        <dbReference type="ChEBI" id="CHEBI:29991"/>
    </ligand>
</feature>
<feature type="binding site" evidence="1">
    <location>
        <position position="109"/>
    </location>
    <ligand>
        <name>carbamoyl phosphate</name>
        <dbReference type="ChEBI" id="CHEBI:58228"/>
    </ligand>
</feature>
<feature type="binding site" evidence="1">
    <location>
        <position position="137"/>
    </location>
    <ligand>
        <name>carbamoyl phosphate</name>
        <dbReference type="ChEBI" id="CHEBI:58228"/>
    </ligand>
</feature>
<feature type="binding site" evidence="1">
    <location>
        <position position="140"/>
    </location>
    <ligand>
        <name>carbamoyl phosphate</name>
        <dbReference type="ChEBI" id="CHEBI:58228"/>
    </ligand>
</feature>
<feature type="binding site" evidence="1">
    <location>
        <position position="170"/>
    </location>
    <ligand>
        <name>L-aspartate</name>
        <dbReference type="ChEBI" id="CHEBI:29991"/>
    </ligand>
</feature>
<feature type="binding site" evidence="1">
    <location>
        <position position="224"/>
    </location>
    <ligand>
        <name>L-aspartate</name>
        <dbReference type="ChEBI" id="CHEBI:29991"/>
    </ligand>
</feature>
<feature type="binding site" evidence="1">
    <location>
        <position position="265"/>
    </location>
    <ligand>
        <name>carbamoyl phosphate</name>
        <dbReference type="ChEBI" id="CHEBI:58228"/>
    </ligand>
</feature>
<feature type="binding site" evidence="1">
    <location>
        <position position="266"/>
    </location>
    <ligand>
        <name>carbamoyl phosphate</name>
        <dbReference type="ChEBI" id="CHEBI:58228"/>
    </ligand>
</feature>
<reference key="1">
    <citation type="submission" date="2006-03" db="EMBL/GenBank/DDBJ databases">
        <title>Complete genome sequence of Gemmatimonas aurantiaca T-27 that represents a novel phylum Gemmatimonadetes.</title>
        <authorList>
            <person name="Takasaki K."/>
            <person name="Ichikawa N."/>
            <person name="Miura H."/>
            <person name="Matsushita S."/>
            <person name="Watanabe Y."/>
            <person name="Oguchi A."/>
            <person name="Ankai A."/>
            <person name="Yashiro I."/>
            <person name="Takahashi M."/>
            <person name="Terui Y."/>
            <person name="Fukui S."/>
            <person name="Yokoyama H."/>
            <person name="Tanikawa S."/>
            <person name="Hanada S."/>
            <person name="Kamagata Y."/>
            <person name="Fujita N."/>
        </authorList>
    </citation>
    <scope>NUCLEOTIDE SEQUENCE [LARGE SCALE GENOMIC DNA]</scope>
    <source>
        <strain>DSM 14586 / JCM 11422 / NBRC 100505 / T-27</strain>
    </source>
</reference>
<gene>
    <name evidence="1" type="primary">pyrB</name>
    <name type="ordered locus">GAU_1515</name>
</gene>
<proteinExistence type="inferred from homology"/>
<protein>
    <recommendedName>
        <fullName evidence="1">Aspartate carbamoyltransferase catalytic subunit</fullName>
        <ecNumber evidence="1">2.1.3.2</ecNumber>
    </recommendedName>
    <alternativeName>
        <fullName evidence="1">Aspartate transcarbamylase</fullName>
        <shortName evidence="1">ATCase</shortName>
    </alternativeName>
</protein>
<evidence type="ECO:0000255" key="1">
    <source>
        <dbReference type="HAMAP-Rule" id="MF_00001"/>
    </source>
</evidence>
<accession>C1A8J7</accession>
<organism>
    <name type="scientific">Gemmatimonas aurantiaca (strain DSM 14586 / JCM 11422 / NBRC 100505 / T-27)</name>
    <dbReference type="NCBI Taxonomy" id="379066"/>
    <lineage>
        <taxon>Bacteria</taxon>
        <taxon>Pseudomonadati</taxon>
        <taxon>Gemmatimonadota</taxon>
        <taxon>Gemmatimonadia</taxon>
        <taxon>Gemmatimonadales</taxon>
        <taxon>Gemmatimonadaceae</taxon>
        <taxon>Gemmatimonas</taxon>
    </lineage>
</organism>
<keyword id="KW-0665">Pyrimidine biosynthesis</keyword>
<keyword id="KW-1185">Reference proteome</keyword>
<keyword id="KW-0808">Transferase</keyword>
<name>PYRB_GEMAT</name>
<comment type="function">
    <text evidence="1">Catalyzes the condensation of carbamoyl phosphate and aspartate to form carbamoyl aspartate and inorganic phosphate, the committed step in the de novo pyrimidine nucleotide biosynthesis pathway.</text>
</comment>
<comment type="catalytic activity">
    <reaction evidence="1">
        <text>carbamoyl phosphate + L-aspartate = N-carbamoyl-L-aspartate + phosphate + H(+)</text>
        <dbReference type="Rhea" id="RHEA:20013"/>
        <dbReference type="ChEBI" id="CHEBI:15378"/>
        <dbReference type="ChEBI" id="CHEBI:29991"/>
        <dbReference type="ChEBI" id="CHEBI:32814"/>
        <dbReference type="ChEBI" id="CHEBI:43474"/>
        <dbReference type="ChEBI" id="CHEBI:58228"/>
        <dbReference type="EC" id="2.1.3.2"/>
    </reaction>
</comment>
<comment type="pathway">
    <text evidence="1">Pyrimidine metabolism; UMP biosynthesis via de novo pathway; (S)-dihydroorotate from bicarbonate: step 2/3.</text>
</comment>
<comment type="subunit">
    <text evidence="1">Heterododecamer (2C3:3R2) of six catalytic PyrB chains organized as two trimers (C3), and six regulatory PyrI chains organized as three dimers (R2).</text>
</comment>
<comment type="similarity">
    <text evidence="1">Belongs to the aspartate/ornithine carbamoyltransferase superfamily. ATCase family.</text>
</comment>
<sequence length="319" mass="34324">MAGPLGKDLLGLAPLSAEQIRLVLDTAIPFREISERAIKKVPTLRGATIVNLFFEASTRTRISFEFAEKRLSADTVNVAVAGSSVSKGETLVDTARNLEAMKIDMVVIRHPASGAARFLAERIESNVINAGDGTNEHPTQGLLDMLTLRDRLGDLAGKRICIVGDVLHSRVARSNIWGLKKLGAEVAVCGPRSLLPNAIGEMGVTVFDRVEAAIEWADALNILRLQLERMQAGYIPSLREYNRVFGVTSARLEHASRDLLILHPGPMNRGVEIDSDVADGPHSVILDQVTNGVAVRMAVLYLLAGGKPELADAAQKGVA</sequence>
<dbReference type="EC" id="2.1.3.2" evidence="1"/>
<dbReference type="EMBL" id="AP009153">
    <property type="protein sequence ID" value="BAH38557.1"/>
    <property type="molecule type" value="Genomic_DNA"/>
</dbReference>
<dbReference type="RefSeq" id="WP_012683004.1">
    <property type="nucleotide sequence ID" value="NC_012489.1"/>
</dbReference>
<dbReference type="SMR" id="C1A8J7"/>
<dbReference type="STRING" id="379066.GAU_1515"/>
<dbReference type="KEGG" id="gau:GAU_1515"/>
<dbReference type="eggNOG" id="COG0540">
    <property type="taxonomic scope" value="Bacteria"/>
</dbReference>
<dbReference type="HOGENOM" id="CLU_043846_2_0_0"/>
<dbReference type="OrthoDB" id="9774690at2"/>
<dbReference type="UniPathway" id="UPA00070">
    <property type="reaction ID" value="UER00116"/>
</dbReference>
<dbReference type="Proteomes" id="UP000002209">
    <property type="component" value="Chromosome"/>
</dbReference>
<dbReference type="GO" id="GO:0005829">
    <property type="term" value="C:cytosol"/>
    <property type="evidence" value="ECO:0007669"/>
    <property type="project" value="TreeGrafter"/>
</dbReference>
<dbReference type="GO" id="GO:0016597">
    <property type="term" value="F:amino acid binding"/>
    <property type="evidence" value="ECO:0007669"/>
    <property type="project" value="InterPro"/>
</dbReference>
<dbReference type="GO" id="GO:0004070">
    <property type="term" value="F:aspartate carbamoyltransferase activity"/>
    <property type="evidence" value="ECO:0007669"/>
    <property type="project" value="UniProtKB-UniRule"/>
</dbReference>
<dbReference type="GO" id="GO:0006207">
    <property type="term" value="P:'de novo' pyrimidine nucleobase biosynthetic process"/>
    <property type="evidence" value="ECO:0007669"/>
    <property type="project" value="InterPro"/>
</dbReference>
<dbReference type="GO" id="GO:0044205">
    <property type="term" value="P:'de novo' UMP biosynthetic process"/>
    <property type="evidence" value="ECO:0007669"/>
    <property type="project" value="UniProtKB-UniRule"/>
</dbReference>
<dbReference type="GO" id="GO:0006520">
    <property type="term" value="P:amino acid metabolic process"/>
    <property type="evidence" value="ECO:0007669"/>
    <property type="project" value="InterPro"/>
</dbReference>
<dbReference type="FunFam" id="3.40.50.1370:FF:000007">
    <property type="entry name" value="Aspartate carbamoyltransferase"/>
    <property type="match status" value="1"/>
</dbReference>
<dbReference type="Gene3D" id="3.40.50.1370">
    <property type="entry name" value="Aspartate/ornithine carbamoyltransferase"/>
    <property type="match status" value="2"/>
</dbReference>
<dbReference type="HAMAP" id="MF_00001">
    <property type="entry name" value="Asp_carb_tr"/>
    <property type="match status" value="1"/>
</dbReference>
<dbReference type="InterPro" id="IPR006132">
    <property type="entry name" value="Asp/Orn_carbamoyltranf_P-bd"/>
</dbReference>
<dbReference type="InterPro" id="IPR006130">
    <property type="entry name" value="Asp/Orn_carbamoylTrfase"/>
</dbReference>
<dbReference type="InterPro" id="IPR036901">
    <property type="entry name" value="Asp/Orn_carbamoylTrfase_sf"/>
</dbReference>
<dbReference type="InterPro" id="IPR002082">
    <property type="entry name" value="Asp_carbamoyltransf"/>
</dbReference>
<dbReference type="InterPro" id="IPR006131">
    <property type="entry name" value="Asp_carbamoyltransf_Asp/Orn-bd"/>
</dbReference>
<dbReference type="NCBIfam" id="TIGR00670">
    <property type="entry name" value="asp_carb_tr"/>
    <property type="match status" value="1"/>
</dbReference>
<dbReference type="NCBIfam" id="NF002032">
    <property type="entry name" value="PRK00856.1"/>
    <property type="match status" value="1"/>
</dbReference>
<dbReference type="PANTHER" id="PTHR45753:SF6">
    <property type="entry name" value="ASPARTATE CARBAMOYLTRANSFERASE"/>
    <property type="match status" value="1"/>
</dbReference>
<dbReference type="PANTHER" id="PTHR45753">
    <property type="entry name" value="ORNITHINE CARBAMOYLTRANSFERASE, MITOCHONDRIAL"/>
    <property type="match status" value="1"/>
</dbReference>
<dbReference type="Pfam" id="PF00185">
    <property type="entry name" value="OTCace"/>
    <property type="match status" value="1"/>
</dbReference>
<dbReference type="Pfam" id="PF02729">
    <property type="entry name" value="OTCace_N"/>
    <property type="match status" value="1"/>
</dbReference>
<dbReference type="PRINTS" id="PR00100">
    <property type="entry name" value="AOTCASE"/>
</dbReference>
<dbReference type="PRINTS" id="PR00101">
    <property type="entry name" value="ATCASE"/>
</dbReference>
<dbReference type="SUPFAM" id="SSF53671">
    <property type="entry name" value="Aspartate/ornithine carbamoyltransferase"/>
    <property type="match status" value="1"/>
</dbReference>
<dbReference type="PROSITE" id="PS00097">
    <property type="entry name" value="CARBAMOYLTRANSFERASE"/>
    <property type="match status" value="1"/>
</dbReference>